<comment type="function">
    <text evidence="1">IF-3 binds to the 30S ribosomal subunit and shifts the equilibrium between 70S ribosomes and their 50S and 30S subunits in favor of the free subunits, thus enhancing the availability of 30S subunits on which protein synthesis initiation begins.</text>
</comment>
<comment type="subunit">
    <text evidence="1">Monomer.</text>
</comment>
<comment type="subcellular location">
    <subcellularLocation>
        <location evidence="1">Cytoplasm</location>
    </subcellularLocation>
</comment>
<comment type="similarity">
    <text evidence="1">Belongs to the IF-3 family.</text>
</comment>
<organism>
    <name type="scientific">Staphylococcus aureus (strain COL)</name>
    <dbReference type="NCBI Taxonomy" id="93062"/>
    <lineage>
        <taxon>Bacteria</taxon>
        <taxon>Bacillati</taxon>
        <taxon>Bacillota</taxon>
        <taxon>Bacilli</taxon>
        <taxon>Bacillales</taxon>
        <taxon>Staphylococcaceae</taxon>
        <taxon>Staphylococcus</taxon>
    </lineage>
</organism>
<accession>Q5HF92</accession>
<gene>
    <name evidence="1" type="primary">infC</name>
    <name type="ordered locus">SACOL1727</name>
</gene>
<dbReference type="EMBL" id="CP000046">
    <property type="protein sequence ID" value="AAW36832.1"/>
    <property type="molecule type" value="Genomic_DNA"/>
</dbReference>
<dbReference type="RefSeq" id="WP_001791162.1">
    <property type="nucleotide sequence ID" value="NZ_JBGOFO010000003.1"/>
</dbReference>
<dbReference type="SMR" id="Q5HF92"/>
<dbReference type="GeneID" id="66839860"/>
<dbReference type="KEGG" id="sac:SACOL1727"/>
<dbReference type="HOGENOM" id="CLU_054919_3_2_9"/>
<dbReference type="Proteomes" id="UP000000530">
    <property type="component" value="Chromosome"/>
</dbReference>
<dbReference type="GO" id="GO:0005829">
    <property type="term" value="C:cytosol"/>
    <property type="evidence" value="ECO:0007669"/>
    <property type="project" value="TreeGrafter"/>
</dbReference>
<dbReference type="GO" id="GO:0016020">
    <property type="term" value="C:membrane"/>
    <property type="evidence" value="ECO:0007669"/>
    <property type="project" value="TreeGrafter"/>
</dbReference>
<dbReference type="GO" id="GO:0043022">
    <property type="term" value="F:ribosome binding"/>
    <property type="evidence" value="ECO:0007669"/>
    <property type="project" value="TreeGrafter"/>
</dbReference>
<dbReference type="GO" id="GO:0003743">
    <property type="term" value="F:translation initiation factor activity"/>
    <property type="evidence" value="ECO:0007669"/>
    <property type="project" value="UniProtKB-UniRule"/>
</dbReference>
<dbReference type="GO" id="GO:0032790">
    <property type="term" value="P:ribosome disassembly"/>
    <property type="evidence" value="ECO:0007669"/>
    <property type="project" value="TreeGrafter"/>
</dbReference>
<dbReference type="FunFam" id="3.10.20.80:FF:000001">
    <property type="entry name" value="Translation initiation factor IF-3"/>
    <property type="match status" value="1"/>
</dbReference>
<dbReference type="FunFam" id="3.30.110.10:FF:000001">
    <property type="entry name" value="Translation initiation factor IF-3"/>
    <property type="match status" value="1"/>
</dbReference>
<dbReference type="Gene3D" id="3.30.110.10">
    <property type="entry name" value="Translation initiation factor 3 (IF-3), C-terminal domain"/>
    <property type="match status" value="1"/>
</dbReference>
<dbReference type="Gene3D" id="3.10.20.80">
    <property type="entry name" value="Translation initiation factor 3 (IF-3), N-terminal domain"/>
    <property type="match status" value="1"/>
</dbReference>
<dbReference type="HAMAP" id="MF_00080">
    <property type="entry name" value="IF_3"/>
    <property type="match status" value="1"/>
</dbReference>
<dbReference type="InterPro" id="IPR036788">
    <property type="entry name" value="T_IF-3_C_sf"/>
</dbReference>
<dbReference type="InterPro" id="IPR036787">
    <property type="entry name" value="T_IF-3_N_sf"/>
</dbReference>
<dbReference type="InterPro" id="IPR019813">
    <property type="entry name" value="Translation_initiation_fac3_CS"/>
</dbReference>
<dbReference type="InterPro" id="IPR001288">
    <property type="entry name" value="Translation_initiation_fac_3"/>
</dbReference>
<dbReference type="InterPro" id="IPR019815">
    <property type="entry name" value="Translation_initiation_fac_3_C"/>
</dbReference>
<dbReference type="InterPro" id="IPR019814">
    <property type="entry name" value="Translation_initiation_fac_3_N"/>
</dbReference>
<dbReference type="NCBIfam" id="TIGR00168">
    <property type="entry name" value="infC"/>
    <property type="match status" value="1"/>
</dbReference>
<dbReference type="PANTHER" id="PTHR10938">
    <property type="entry name" value="TRANSLATION INITIATION FACTOR IF-3"/>
    <property type="match status" value="1"/>
</dbReference>
<dbReference type="PANTHER" id="PTHR10938:SF0">
    <property type="entry name" value="TRANSLATION INITIATION FACTOR IF-3, MITOCHONDRIAL"/>
    <property type="match status" value="1"/>
</dbReference>
<dbReference type="Pfam" id="PF00707">
    <property type="entry name" value="IF3_C"/>
    <property type="match status" value="1"/>
</dbReference>
<dbReference type="Pfam" id="PF05198">
    <property type="entry name" value="IF3_N"/>
    <property type="match status" value="1"/>
</dbReference>
<dbReference type="SUPFAM" id="SSF55200">
    <property type="entry name" value="Translation initiation factor IF3, C-terminal domain"/>
    <property type="match status" value="1"/>
</dbReference>
<dbReference type="SUPFAM" id="SSF54364">
    <property type="entry name" value="Translation initiation factor IF3, N-terminal domain"/>
    <property type="match status" value="1"/>
</dbReference>
<dbReference type="PROSITE" id="PS00938">
    <property type="entry name" value="IF3"/>
    <property type="match status" value="1"/>
</dbReference>
<sequence>MSTIAKDQTQINDKIRAKELRLIGQDGEQIGVKSKREALEMAERVDLDLVVVAPNAKPPVARIMDYGKFKFEQQKKEKEMKKKQKIINVKEIRLSPTIEEHDFQTKLKNGRKFLTKGDKCKVSIRFRGRAITHKEIGQRVLEKYADECKDIATVEQKPKMDGRQMFIMLAPTAEK</sequence>
<feature type="chain" id="PRO_0000177575" description="Translation initiation factor IF-3">
    <location>
        <begin position="1"/>
        <end position="175"/>
    </location>
</feature>
<proteinExistence type="inferred from homology"/>
<reference key="1">
    <citation type="journal article" date="2005" name="J. Bacteriol.">
        <title>Insights on evolution of virulence and resistance from the complete genome analysis of an early methicillin-resistant Staphylococcus aureus strain and a biofilm-producing methicillin-resistant Staphylococcus epidermidis strain.</title>
        <authorList>
            <person name="Gill S.R."/>
            <person name="Fouts D.E."/>
            <person name="Archer G.L."/>
            <person name="Mongodin E.F."/>
            <person name="DeBoy R.T."/>
            <person name="Ravel J."/>
            <person name="Paulsen I.T."/>
            <person name="Kolonay J.F."/>
            <person name="Brinkac L.M."/>
            <person name="Beanan M.J."/>
            <person name="Dodson R.J."/>
            <person name="Daugherty S.C."/>
            <person name="Madupu R."/>
            <person name="Angiuoli S.V."/>
            <person name="Durkin A.S."/>
            <person name="Haft D.H."/>
            <person name="Vamathevan J.J."/>
            <person name="Khouri H."/>
            <person name="Utterback T.R."/>
            <person name="Lee C."/>
            <person name="Dimitrov G."/>
            <person name="Jiang L."/>
            <person name="Qin H."/>
            <person name="Weidman J."/>
            <person name="Tran K."/>
            <person name="Kang K.H."/>
            <person name="Hance I.R."/>
            <person name="Nelson K.E."/>
            <person name="Fraser C.M."/>
        </authorList>
    </citation>
    <scope>NUCLEOTIDE SEQUENCE [LARGE SCALE GENOMIC DNA]</scope>
    <source>
        <strain>COL</strain>
    </source>
</reference>
<name>IF3_STAAC</name>
<evidence type="ECO:0000255" key="1">
    <source>
        <dbReference type="HAMAP-Rule" id="MF_00080"/>
    </source>
</evidence>
<protein>
    <recommendedName>
        <fullName evidence="1">Translation initiation factor IF-3</fullName>
    </recommendedName>
</protein>
<keyword id="KW-0963">Cytoplasm</keyword>
<keyword id="KW-0396">Initiation factor</keyword>
<keyword id="KW-0648">Protein biosynthesis</keyword>